<keyword id="KW-0268">Exocytosis</keyword>
<keyword id="KW-0653">Protein transport</keyword>
<keyword id="KW-1185">Reference proteome</keyword>
<keyword id="KW-0813">Transport</keyword>
<organism>
    <name type="scientific">Candida glabrata (strain ATCC 2001 / BCRC 20586 / JCM 3761 / NBRC 0622 / NRRL Y-65 / CBS 138)</name>
    <name type="common">Yeast</name>
    <name type="synonym">Nakaseomyces glabratus</name>
    <dbReference type="NCBI Taxonomy" id="284593"/>
    <lineage>
        <taxon>Eukaryota</taxon>
        <taxon>Fungi</taxon>
        <taxon>Dikarya</taxon>
        <taxon>Ascomycota</taxon>
        <taxon>Saccharomycotina</taxon>
        <taxon>Saccharomycetes</taxon>
        <taxon>Saccharomycetales</taxon>
        <taxon>Saccharomycetaceae</taxon>
        <taxon>Nakaseomyces</taxon>
    </lineage>
</organism>
<protein>
    <recommendedName>
        <fullName>Exocyst complex protein EXO70</fullName>
    </recommendedName>
</protein>
<accession>Q6FJW2</accession>
<name>EXO70_CANGA</name>
<gene>
    <name type="primary">EXO70</name>
    <name type="ordered locus">CAGL0M03113g</name>
</gene>
<proteinExistence type="inferred from homology"/>
<reference key="1">
    <citation type="journal article" date="2004" name="Nature">
        <title>Genome evolution in yeasts.</title>
        <authorList>
            <person name="Dujon B."/>
            <person name="Sherman D."/>
            <person name="Fischer G."/>
            <person name="Durrens P."/>
            <person name="Casaregola S."/>
            <person name="Lafontaine I."/>
            <person name="de Montigny J."/>
            <person name="Marck C."/>
            <person name="Neuveglise C."/>
            <person name="Talla E."/>
            <person name="Goffard N."/>
            <person name="Frangeul L."/>
            <person name="Aigle M."/>
            <person name="Anthouard V."/>
            <person name="Babour A."/>
            <person name="Barbe V."/>
            <person name="Barnay S."/>
            <person name="Blanchin S."/>
            <person name="Beckerich J.-M."/>
            <person name="Beyne E."/>
            <person name="Bleykasten C."/>
            <person name="Boisrame A."/>
            <person name="Boyer J."/>
            <person name="Cattolico L."/>
            <person name="Confanioleri F."/>
            <person name="de Daruvar A."/>
            <person name="Despons L."/>
            <person name="Fabre E."/>
            <person name="Fairhead C."/>
            <person name="Ferry-Dumazet H."/>
            <person name="Groppi A."/>
            <person name="Hantraye F."/>
            <person name="Hennequin C."/>
            <person name="Jauniaux N."/>
            <person name="Joyet P."/>
            <person name="Kachouri R."/>
            <person name="Kerrest A."/>
            <person name="Koszul R."/>
            <person name="Lemaire M."/>
            <person name="Lesur I."/>
            <person name="Ma L."/>
            <person name="Muller H."/>
            <person name="Nicaud J.-M."/>
            <person name="Nikolski M."/>
            <person name="Oztas S."/>
            <person name="Ozier-Kalogeropoulos O."/>
            <person name="Pellenz S."/>
            <person name="Potier S."/>
            <person name="Richard G.-F."/>
            <person name="Straub M.-L."/>
            <person name="Suleau A."/>
            <person name="Swennen D."/>
            <person name="Tekaia F."/>
            <person name="Wesolowski-Louvel M."/>
            <person name="Westhof E."/>
            <person name="Wirth B."/>
            <person name="Zeniou-Meyer M."/>
            <person name="Zivanovic Y."/>
            <person name="Bolotin-Fukuhara M."/>
            <person name="Thierry A."/>
            <person name="Bouchier C."/>
            <person name="Caudron B."/>
            <person name="Scarpelli C."/>
            <person name="Gaillardin C."/>
            <person name="Weissenbach J."/>
            <person name="Wincker P."/>
            <person name="Souciet J.-L."/>
        </authorList>
    </citation>
    <scope>NUCLEOTIDE SEQUENCE [LARGE SCALE GENOMIC DNA]</scope>
    <source>
        <strain>ATCC 2001 / BCRC 20586 / JCM 3761 / NBRC 0622 / NRRL Y-65 / CBS 138</strain>
    </source>
</reference>
<evidence type="ECO:0000250" key="1"/>
<evidence type="ECO:0000305" key="2"/>
<comment type="function">
    <text evidence="1">Involved in the secretory pathway as part of the exocyst complex which tethers secretory vesicles to the sites of exocytosis. Also plays a role in the assembly of the exocyst (By similarity).</text>
</comment>
<comment type="subcellular location">
    <subcellularLocation>
        <location evidence="1">Bud</location>
    </subcellularLocation>
    <subcellularLocation>
        <location evidence="1">Bud neck</location>
    </subcellularLocation>
</comment>
<comment type="similarity">
    <text evidence="2">Belongs to the EXO70 family.</text>
</comment>
<sequence length="623" mass="71155">MNEIDVDEADILVLSQGLEKTSRLTHQVNKSLAKISKTSAQSSQLFGPILARNNVLKTLQRNIDSTLNSVASVKDLANEASKHEVLLRKGIASLGLKPFTVELHKLEDMYQDMSVGNSRHTENAEFHGILKHLKEMITSSEEQLELEFIQILKRIEPFDPQINMEKKIPFPYYSDEDISQMLIIFNYFYVKSEDSRMQDIFIRERGDQMLKSMAFMEPFAKKVTSSKNAPYEKGSSGFINYTEAVLGFIANERSLIDDVFSQFAEIKPRVLRNILDPIVAAFCKVLMSDLIFVKSNIDNAGLFSFELTECISGVQKSVKGMNLKNQMQLIDADKQVKDVTRSLFKDTVDRIKSKTNQMTTIPSDNGVTEATVDTMSRLRKFSEYKTGCLAAMESISRDVWLSKSFREKEYTIQSAAIADNETAASLLSCFLSDCIDTLVANLERRAQTILMPNQEPDVANPNSARNKFKQRIGFLVLMNMTLVEQIVEKSELSVMLGNLGKARIEKLKKRYVNYLVADWKDLTVNLMDTVVIDSVGKKSKDKEQIKEKFRRFNEGFEDLISRTKQYKLSDPALKRLLKSEIVALLMPMYDRFYGRYKDSFKNPRKHIKYTPDDITNVISQTLR</sequence>
<dbReference type="EMBL" id="CR380959">
    <property type="protein sequence ID" value="CAG62458.1"/>
    <property type="molecule type" value="Genomic_DNA"/>
</dbReference>
<dbReference type="RefSeq" id="XP_449482.1">
    <property type="nucleotide sequence ID" value="XM_449482.1"/>
</dbReference>
<dbReference type="SMR" id="Q6FJW2"/>
<dbReference type="FunCoup" id="Q6FJW2">
    <property type="interactions" value="136"/>
</dbReference>
<dbReference type="STRING" id="284593.Q6FJW2"/>
<dbReference type="EnsemblFungi" id="CAGL0M03113g-T">
    <property type="protein sequence ID" value="CAGL0M03113g-T-p1"/>
    <property type="gene ID" value="CAGL0M03113g"/>
</dbReference>
<dbReference type="KEGG" id="cgr:2891490"/>
<dbReference type="CGD" id="CAL0136511">
    <property type="gene designation" value="CAGL0M03113g"/>
</dbReference>
<dbReference type="VEuPathDB" id="FungiDB:B1J91_M03113g"/>
<dbReference type="VEuPathDB" id="FungiDB:CAGL0M03113g"/>
<dbReference type="eggNOG" id="KOG2344">
    <property type="taxonomic scope" value="Eukaryota"/>
</dbReference>
<dbReference type="HOGENOM" id="CLU_010236_4_1_1"/>
<dbReference type="InParanoid" id="Q6FJW2"/>
<dbReference type="OMA" id="GIIRAGP"/>
<dbReference type="Proteomes" id="UP000002428">
    <property type="component" value="Chromosome M"/>
</dbReference>
<dbReference type="GO" id="GO:0005935">
    <property type="term" value="C:cellular bud neck"/>
    <property type="evidence" value="ECO:0007669"/>
    <property type="project" value="UniProtKB-SubCell"/>
</dbReference>
<dbReference type="GO" id="GO:0005934">
    <property type="term" value="C:cellular bud tip"/>
    <property type="evidence" value="ECO:0007669"/>
    <property type="project" value="EnsemblFungi"/>
</dbReference>
<dbReference type="GO" id="GO:0000145">
    <property type="term" value="C:exocyst"/>
    <property type="evidence" value="ECO:0007669"/>
    <property type="project" value="EnsemblFungi"/>
</dbReference>
<dbReference type="GO" id="GO:0000131">
    <property type="term" value="C:incipient cellular bud site"/>
    <property type="evidence" value="ECO:0007669"/>
    <property type="project" value="EnsemblFungi"/>
</dbReference>
<dbReference type="GO" id="GO:0005886">
    <property type="term" value="C:plasma membrane"/>
    <property type="evidence" value="ECO:0007669"/>
    <property type="project" value="EnsemblFungi"/>
</dbReference>
<dbReference type="GO" id="GO:0005546">
    <property type="term" value="F:phosphatidylinositol-4,5-bisphosphate binding"/>
    <property type="evidence" value="ECO:0007669"/>
    <property type="project" value="EnsemblFungi"/>
</dbReference>
<dbReference type="GO" id="GO:0031267">
    <property type="term" value="F:small GTPase binding"/>
    <property type="evidence" value="ECO:0007669"/>
    <property type="project" value="EnsemblFungi"/>
</dbReference>
<dbReference type="GO" id="GO:0001927">
    <property type="term" value="P:exocyst assembly"/>
    <property type="evidence" value="ECO:0007669"/>
    <property type="project" value="EnsemblFungi"/>
</dbReference>
<dbReference type="GO" id="GO:0051601">
    <property type="term" value="P:exocyst localization"/>
    <property type="evidence" value="ECO:0007669"/>
    <property type="project" value="EnsemblFungi"/>
</dbReference>
<dbReference type="GO" id="GO:0006893">
    <property type="term" value="P:Golgi to plasma membrane transport"/>
    <property type="evidence" value="ECO:0007669"/>
    <property type="project" value="EnsemblFungi"/>
</dbReference>
<dbReference type="GO" id="GO:0015031">
    <property type="term" value="P:protein transport"/>
    <property type="evidence" value="ECO:0007669"/>
    <property type="project" value="UniProtKB-KW"/>
</dbReference>
<dbReference type="GO" id="GO:0007266">
    <property type="term" value="P:Rho protein signal transduction"/>
    <property type="evidence" value="ECO:0007669"/>
    <property type="project" value="EnsemblFungi"/>
</dbReference>
<dbReference type="Gene3D" id="1.10.357.60">
    <property type="match status" value="1"/>
</dbReference>
<dbReference type="Gene3D" id="1.20.1310.30">
    <property type="match status" value="1"/>
</dbReference>
<dbReference type="Gene3D" id="1.20.58.1150">
    <property type="match status" value="1"/>
</dbReference>
<dbReference type="Gene3D" id="1.20.1280.170">
    <property type="entry name" value="Exocyst complex component Exo70"/>
    <property type="match status" value="1"/>
</dbReference>
<dbReference type="InterPro" id="IPR016159">
    <property type="entry name" value="Cullin_repeat-like_dom_sf"/>
</dbReference>
<dbReference type="InterPro" id="IPR004140">
    <property type="entry name" value="Exo70"/>
</dbReference>
<dbReference type="InterPro" id="IPR046364">
    <property type="entry name" value="Exo70_C"/>
</dbReference>
<dbReference type="PANTHER" id="PTHR12542:SF41">
    <property type="entry name" value="EXOCYST COMPLEX COMPONENT 7"/>
    <property type="match status" value="1"/>
</dbReference>
<dbReference type="PANTHER" id="PTHR12542">
    <property type="entry name" value="EXOCYST COMPLEX PROTEIN EXO70"/>
    <property type="match status" value="1"/>
</dbReference>
<dbReference type="Pfam" id="PF03081">
    <property type="entry name" value="Exo70_C"/>
    <property type="match status" value="1"/>
</dbReference>
<dbReference type="Pfam" id="PF20669">
    <property type="entry name" value="Exo70_N"/>
    <property type="match status" value="1"/>
</dbReference>
<dbReference type="SUPFAM" id="SSF74788">
    <property type="entry name" value="Cullin repeat-like"/>
    <property type="match status" value="1"/>
</dbReference>
<feature type="chain" id="PRO_0000118967" description="Exocyst complex protein EXO70">
    <location>
        <begin position="1"/>
        <end position="623"/>
    </location>
</feature>